<reference key="1">
    <citation type="journal article" date="2000" name="Nucleic Acids Res.">
        <title>Complete genome sequence of the alkaliphilic bacterium Bacillus halodurans and genomic sequence comparison with Bacillus subtilis.</title>
        <authorList>
            <person name="Takami H."/>
            <person name="Nakasone K."/>
            <person name="Takaki Y."/>
            <person name="Maeno G."/>
            <person name="Sasaki R."/>
            <person name="Masui N."/>
            <person name="Fuji F."/>
            <person name="Hirama C."/>
            <person name="Nakamura Y."/>
            <person name="Ogasawara N."/>
            <person name="Kuhara S."/>
            <person name="Horikoshi K."/>
        </authorList>
    </citation>
    <scope>NUCLEOTIDE SEQUENCE [LARGE SCALE GENOMIC DNA]</scope>
    <source>
        <strain>ATCC BAA-125 / DSM 18197 / FERM 7344 / JCM 9153 / C-125</strain>
    </source>
</reference>
<name>KHPA_HALH5</name>
<organism>
    <name type="scientific">Halalkalibacterium halodurans (strain ATCC BAA-125 / DSM 18197 / FERM 7344 / JCM 9153 / C-125)</name>
    <name type="common">Bacillus halodurans</name>
    <dbReference type="NCBI Taxonomy" id="272558"/>
    <lineage>
        <taxon>Bacteria</taxon>
        <taxon>Bacillati</taxon>
        <taxon>Bacillota</taxon>
        <taxon>Bacilli</taxon>
        <taxon>Bacillales</taxon>
        <taxon>Bacillaceae</taxon>
        <taxon>Halalkalibacterium (ex Joshi et al. 2022)</taxon>
    </lineage>
</organism>
<feature type="chain" id="PRO_0000163215" description="RNA-binding protein KhpA">
    <location>
        <begin position="1"/>
        <end position="76"/>
    </location>
</feature>
<feature type="domain" description="KH" evidence="1">
    <location>
        <begin position="29"/>
        <end position="76"/>
    </location>
</feature>
<proteinExistence type="inferred from homology"/>
<keyword id="KW-0133">Cell shape</keyword>
<keyword id="KW-0961">Cell wall biogenesis/degradation</keyword>
<keyword id="KW-0143">Chaperone</keyword>
<keyword id="KW-0963">Cytoplasm</keyword>
<keyword id="KW-1185">Reference proteome</keyword>
<keyword id="KW-0694">RNA-binding</keyword>
<comment type="function">
    <text evidence="1">A probable RNA chaperone. Forms a complex with KhpB which binds to cellular RNA and controls its expression. Plays a role in peptidoglycan (PG) homeostasis and cell length regulation.</text>
</comment>
<comment type="subunit">
    <text evidence="1">Forms a complex with KhpB.</text>
</comment>
<comment type="subcellular location">
    <subcellularLocation>
        <location evidence="1">Cytoplasm</location>
    </subcellularLocation>
</comment>
<comment type="similarity">
    <text evidence="1">Belongs to the KhpA RNA-binding protein family.</text>
</comment>
<dbReference type="EMBL" id="BA000004">
    <property type="protein sequence ID" value="BAB06201.1"/>
    <property type="molecule type" value="Genomic_DNA"/>
</dbReference>
<dbReference type="PIR" id="B83960">
    <property type="entry name" value="B83960"/>
</dbReference>
<dbReference type="RefSeq" id="WP_010898633.1">
    <property type="nucleotide sequence ID" value="NC_002570.2"/>
</dbReference>
<dbReference type="SMR" id="Q9KA12"/>
<dbReference type="STRING" id="272558.gene:10728380"/>
<dbReference type="GeneID" id="87598001"/>
<dbReference type="KEGG" id="bha:BH2482"/>
<dbReference type="eggNOG" id="COG1837">
    <property type="taxonomic scope" value="Bacteria"/>
</dbReference>
<dbReference type="HOGENOM" id="CLU_132074_3_0_9"/>
<dbReference type="OrthoDB" id="9812389at2"/>
<dbReference type="Proteomes" id="UP000001258">
    <property type="component" value="Chromosome"/>
</dbReference>
<dbReference type="GO" id="GO:0005737">
    <property type="term" value="C:cytoplasm"/>
    <property type="evidence" value="ECO:0007669"/>
    <property type="project" value="UniProtKB-SubCell"/>
</dbReference>
<dbReference type="GO" id="GO:0003723">
    <property type="term" value="F:RNA binding"/>
    <property type="evidence" value="ECO:0007669"/>
    <property type="project" value="UniProtKB-UniRule"/>
</dbReference>
<dbReference type="GO" id="GO:0071555">
    <property type="term" value="P:cell wall organization"/>
    <property type="evidence" value="ECO:0007669"/>
    <property type="project" value="UniProtKB-KW"/>
</dbReference>
<dbReference type="GO" id="GO:0009252">
    <property type="term" value="P:peptidoglycan biosynthetic process"/>
    <property type="evidence" value="ECO:0007669"/>
    <property type="project" value="UniProtKB-UniRule"/>
</dbReference>
<dbReference type="GO" id="GO:0008360">
    <property type="term" value="P:regulation of cell shape"/>
    <property type="evidence" value="ECO:0007669"/>
    <property type="project" value="UniProtKB-KW"/>
</dbReference>
<dbReference type="CDD" id="cd22533">
    <property type="entry name" value="KH-II_YlqC-like"/>
    <property type="match status" value="1"/>
</dbReference>
<dbReference type="Gene3D" id="3.30.300.20">
    <property type="match status" value="1"/>
</dbReference>
<dbReference type="HAMAP" id="MF_00088">
    <property type="entry name" value="KhpA"/>
    <property type="match status" value="1"/>
</dbReference>
<dbReference type="InterPro" id="IPR015946">
    <property type="entry name" value="KH_dom-like_a/b"/>
</dbReference>
<dbReference type="InterPro" id="IPR009019">
    <property type="entry name" value="KH_sf_prok-type"/>
</dbReference>
<dbReference type="InterPro" id="IPR020627">
    <property type="entry name" value="KhpA"/>
</dbReference>
<dbReference type="PANTHER" id="PTHR34654:SF1">
    <property type="entry name" value="RNA-BINDING PROTEIN KHPA"/>
    <property type="match status" value="1"/>
</dbReference>
<dbReference type="PANTHER" id="PTHR34654">
    <property type="entry name" value="UPF0109 PROTEIN SCO5592"/>
    <property type="match status" value="1"/>
</dbReference>
<dbReference type="Pfam" id="PF13083">
    <property type="entry name" value="KH_KhpA-B"/>
    <property type="match status" value="1"/>
</dbReference>
<dbReference type="SUPFAM" id="SSF54814">
    <property type="entry name" value="Prokaryotic type KH domain (KH-domain type II)"/>
    <property type="match status" value="1"/>
</dbReference>
<dbReference type="PROSITE" id="PS50084">
    <property type="entry name" value="KH_TYPE_1"/>
    <property type="match status" value="1"/>
</dbReference>
<gene>
    <name evidence="1" type="primary">khpA</name>
    <name type="ordered locus">BH2482</name>
</gene>
<protein>
    <recommendedName>
        <fullName evidence="1">RNA-binding protein KhpA</fullName>
    </recommendedName>
    <alternativeName>
        <fullName evidence="1">KH-domain protein A</fullName>
    </alternativeName>
</protein>
<evidence type="ECO:0000255" key="1">
    <source>
        <dbReference type="HAMAP-Rule" id="MF_00088"/>
    </source>
</evidence>
<sequence>MKTLVEHIAMALVDHPDDVRVSEHDDGHSLHIELSVHPDDMGKVIGKQGRTAKALRSVVYAAATKQKRRVRLDIID</sequence>
<accession>Q9KA12</accession>